<comment type="function">
    <text evidence="1">Participates in chromosomal partition during cell division. May act via the formation of a condensin-like complex containing Smc and ScpA that pull DNA away from mid-cell into both cell halves.</text>
</comment>
<comment type="subunit">
    <text evidence="1">Homodimer. Homodimerization may be required to stabilize the binding of ScpA to the Smc head domains. Component of a cohesin-like complex composed of ScpA, ScpB and the Smc homodimer, in which ScpA and ScpB bind to the head domain of Smc. The presence of the three proteins is required for the association of the complex with DNA.</text>
</comment>
<comment type="subcellular location">
    <subcellularLocation>
        <location evidence="1">Cytoplasm</location>
    </subcellularLocation>
    <text evidence="1">Associated with two foci at the outer edges of the nucleoid region in young cells, and at four foci within both cell halves in older cells.</text>
</comment>
<comment type="similarity">
    <text evidence="1">Belongs to the ScpB family.</text>
</comment>
<protein>
    <recommendedName>
        <fullName evidence="1">Segregation and condensation protein B</fullName>
    </recommendedName>
</protein>
<accession>Q7ZAJ3</accession>
<keyword id="KW-0131">Cell cycle</keyword>
<keyword id="KW-0132">Cell division</keyword>
<keyword id="KW-0159">Chromosome partition</keyword>
<keyword id="KW-0963">Cytoplasm</keyword>
<gene>
    <name evidence="1" type="primary">scpB</name>
    <name type="ordered locus">SE_1178</name>
</gene>
<dbReference type="EMBL" id="AE015929">
    <property type="protein sequence ID" value="AAO04777.1"/>
    <property type="molecule type" value="Genomic_DNA"/>
</dbReference>
<dbReference type="RefSeq" id="NP_764733.1">
    <property type="nucleotide sequence ID" value="NC_004461.1"/>
</dbReference>
<dbReference type="RefSeq" id="WP_001830975.1">
    <property type="nucleotide sequence ID" value="NZ_WBME01000006.1"/>
</dbReference>
<dbReference type="SMR" id="Q7ZAJ3"/>
<dbReference type="GeneID" id="50018703"/>
<dbReference type="KEGG" id="sep:SE_1178"/>
<dbReference type="PATRIC" id="fig|176280.10.peg.1149"/>
<dbReference type="eggNOG" id="COG1386">
    <property type="taxonomic scope" value="Bacteria"/>
</dbReference>
<dbReference type="HOGENOM" id="CLU_045647_5_3_9"/>
<dbReference type="OrthoDB" id="9806226at2"/>
<dbReference type="Proteomes" id="UP000001411">
    <property type="component" value="Chromosome"/>
</dbReference>
<dbReference type="GO" id="GO:0005737">
    <property type="term" value="C:cytoplasm"/>
    <property type="evidence" value="ECO:0007669"/>
    <property type="project" value="UniProtKB-SubCell"/>
</dbReference>
<dbReference type="GO" id="GO:0051301">
    <property type="term" value="P:cell division"/>
    <property type="evidence" value="ECO:0007669"/>
    <property type="project" value="UniProtKB-KW"/>
</dbReference>
<dbReference type="GO" id="GO:0051304">
    <property type="term" value="P:chromosome separation"/>
    <property type="evidence" value="ECO:0007669"/>
    <property type="project" value="InterPro"/>
</dbReference>
<dbReference type="GO" id="GO:0006260">
    <property type="term" value="P:DNA replication"/>
    <property type="evidence" value="ECO:0007669"/>
    <property type="project" value="UniProtKB-UniRule"/>
</dbReference>
<dbReference type="Gene3D" id="1.10.10.10">
    <property type="entry name" value="Winged helix-like DNA-binding domain superfamily/Winged helix DNA-binding domain"/>
    <property type="match status" value="2"/>
</dbReference>
<dbReference type="HAMAP" id="MF_01804">
    <property type="entry name" value="ScpB"/>
    <property type="match status" value="1"/>
</dbReference>
<dbReference type="InterPro" id="IPR005234">
    <property type="entry name" value="ScpB_csome_segregation"/>
</dbReference>
<dbReference type="InterPro" id="IPR036388">
    <property type="entry name" value="WH-like_DNA-bd_sf"/>
</dbReference>
<dbReference type="InterPro" id="IPR036390">
    <property type="entry name" value="WH_DNA-bd_sf"/>
</dbReference>
<dbReference type="NCBIfam" id="TIGR00281">
    <property type="entry name" value="SMC-Scp complex subunit ScpB"/>
    <property type="match status" value="1"/>
</dbReference>
<dbReference type="PANTHER" id="PTHR34298">
    <property type="entry name" value="SEGREGATION AND CONDENSATION PROTEIN B"/>
    <property type="match status" value="1"/>
</dbReference>
<dbReference type="PANTHER" id="PTHR34298:SF2">
    <property type="entry name" value="SEGREGATION AND CONDENSATION PROTEIN B"/>
    <property type="match status" value="1"/>
</dbReference>
<dbReference type="Pfam" id="PF04079">
    <property type="entry name" value="SMC_ScpB"/>
    <property type="match status" value="1"/>
</dbReference>
<dbReference type="PIRSF" id="PIRSF019345">
    <property type="entry name" value="ScpB"/>
    <property type="match status" value="1"/>
</dbReference>
<dbReference type="SUPFAM" id="SSF46785">
    <property type="entry name" value="Winged helix' DNA-binding domain"/>
    <property type="match status" value="2"/>
</dbReference>
<organism>
    <name type="scientific">Staphylococcus epidermidis (strain ATCC 12228 / FDA PCI 1200)</name>
    <dbReference type="NCBI Taxonomy" id="176280"/>
    <lineage>
        <taxon>Bacteria</taxon>
        <taxon>Bacillati</taxon>
        <taxon>Bacillota</taxon>
        <taxon>Bacilli</taxon>
        <taxon>Bacillales</taxon>
        <taxon>Staphylococcaceae</taxon>
        <taxon>Staphylococcus</taxon>
    </lineage>
</organism>
<evidence type="ECO:0000255" key="1">
    <source>
        <dbReference type="HAMAP-Rule" id="MF_01804"/>
    </source>
</evidence>
<proteinExistence type="inferred from homology"/>
<feature type="chain" id="PRO_0000211151" description="Segregation and condensation protein B">
    <location>
        <begin position="1"/>
        <end position="180"/>
    </location>
</feature>
<name>SCPB_STAES</name>
<sequence>MDNIAILEALLYTSGDEGLEQKQIIDILDINLNQLEDLVSKYHSHGLTIQRYGSTYVLTTKKETSTYIEQLVKEKSKMKLSQAAMETLSIIAYNQPLTRGDIEMIRGINSDGAVKTLIARGLVEAKDVDHSRSHHLITTDLFLNVFGIENLDALPTTEEDEAEMDEFFSNLVNQKGESNE</sequence>
<reference key="1">
    <citation type="journal article" date="2003" name="Mol. Microbiol.">
        <title>Genome-based analysis of virulence genes in a non-biofilm-forming Staphylococcus epidermidis strain (ATCC 12228).</title>
        <authorList>
            <person name="Zhang Y.-Q."/>
            <person name="Ren S.-X."/>
            <person name="Li H.-L."/>
            <person name="Wang Y.-X."/>
            <person name="Fu G."/>
            <person name="Yang J."/>
            <person name="Qin Z.-Q."/>
            <person name="Miao Y.-G."/>
            <person name="Wang W.-Y."/>
            <person name="Chen R.-S."/>
            <person name="Shen Y."/>
            <person name="Chen Z."/>
            <person name="Yuan Z.-H."/>
            <person name="Zhao G.-P."/>
            <person name="Qu D."/>
            <person name="Danchin A."/>
            <person name="Wen Y.-M."/>
        </authorList>
    </citation>
    <scope>NUCLEOTIDE SEQUENCE [LARGE SCALE GENOMIC DNA]</scope>
    <source>
        <strain>ATCC 12228 / FDA PCI 1200</strain>
    </source>
</reference>